<comment type="cofactor">
    <cofactor evidence="1">
        <name>thiamine diphosphate</name>
        <dbReference type="ChEBI" id="CHEBI:58937"/>
    </cofactor>
</comment>
<comment type="similarity">
    <text evidence="1">Belongs to the XFP family.</text>
</comment>
<dbReference type="EC" id="4.1.2.-" evidence="1"/>
<dbReference type="EMBL" id="AL935263">
    <property type="protein sequence ID" value="CCC79788.1"/>
    <property type="molecule type" value="Genomic_DNA"/>
</dbReference>
<dbReference type="RefSeq" id="WP_011101870.1">
    <property type="nucleotide sequence ID" value="NC_004567.2"/>
</dbReference>
<dbReference type="RefSeq" id="YP_004890302.1">
    <property type="nucleotide sequence ID" value="NC_004567.2"/>
</dbReference>
<dbReference type="SMR" id="Q88U67"/>
<dbReference type="STRING" id="220668.lp_2659"/>
<dbReference type="EnsemblBacteria" id="CCC79788">
    <property type="protein sequence ID" value="CCC79788"/>
    <property type="gene ID" value="lp_2659"/>
</dbReference>
<dbReference type="KEGG" id="lpl:lp_2659"/>
<dbReference type="PATRIC" id="fig|220668.9.peg.2227"/>
<dbReference type="eggNOG" id="COG3957">
    <property type="taxonomic scope" value="Bacteria"/>
</dbReference>
<dbReference type="HOGENOM" id="CLU_013954_2_0_9"/>
<dbReference type="OrthoDB" id="9768449at2"/>
<dbReference type="PhylomeDB" id="Q88U67"/>
<dbReference type="BRENDA" id="4.1.2.9">
    <property type="organism ID" value="2849"/>
</dbReference>
<dbReference type="Proteomes" id="UP000000432">
    <property type="component" value="Chromosome"/>
</dbReference>
<dbReference type="GO" id="GO:0016832">
    <property type="term" value="F:aldehyde-lyase activity"/>
    <property type="evidence" value="ECO:0007669"/>
    <property type="project" value="UniProtKB-UniRule"/>
</dbReference>
<dbReference type="GO" id="GO:0005975">
    <property type="term" value="P:carbohydrate metabolic process"/>
    <property type="evidence" value="ECO:0007669"/>
    <property type="project" value="InterPro"/>
</dbReference>
<dbReference type="CDD" id="cd02011">
    <property type="entry name" value="TPP_PK"/>
    <property type="match status" value="1"/>
</dbReference>
<dbReference type="Gene3D" id="3.40.50.920">
    <property type="match status" value="1"/>
</dbReference>
<dbReference type="Gene3D" id="3.40.50.970">
    <property type="match status" value="2"/>
</dbReference>
<dbReference type="HAMAP" id="MF_01403">
    <property type="entry name" value="Phosphoketolase"/>
    <property type="match status" value="1"/>
</dbReference>
<dbReference type="InterPro" id="IPR023962">
    <property type="entry name" value="Phosphoketolase"/>
</dbReference>
<dbReference type="InterPro" id="IPR029061">
    <property type="entry name" value="THDP-binding"/>
</dbReference>
<dbReference type="InterPro" id="IPR009014">
    <property type="entry name" value="Transketo_C/PFOR_II"/>
</dbReference>
<dbReference type="InterPro" id="IPR005593">
    <property type="entry name" value="Xul5P/Fru6P_PKetolase"/>
</dbReference>
<dbReference type="InterPro" id="IPR018969">
    <property type="entry name" value="Xul5P/Fru6P_PKetolase_C"/>
</dbReference>
<dbReference type="InterPro" id="IPR019790">
    <property type="entry name" value="Xul5P/Fru6P_PKetolase_CS"/>
</dbReference>
<dbReference type="InterPro" id="IPR018970">
    <property type="entry name" value="Xul5P/Fru6P_PKetolase_N"/>
</dbReference>
<dbReference type="InterPro" id="IPR019789">
    <property type="entry name" value="Xul5P/Fru6P_PKetolase_ThDP_BS"/>
</dbReference>
<dbReference type="NCBIfam" id="NF003618">
    <property type="entry name" value="PRK05261.1-3"/>
    <property type="match status" value="1"/>
</dbReference>
<dbReference type="NCBIfam" id="NF003619">
    <property type="entry name" value="PRK05261.1-4"/>
    <property type="match status" value="1"/>
</dbReference>
<dbReference type="PANTHER" id="PTHR31273">
    <property type="entry name" value="PHOSPHOKETOLASE-RELATED"/>
    <property type="match status" value="1"/>
</dbReference>
<dbReference type="PANTHER" id="PTHR31273:SF0">
    <property type="entry name" value="PHOSPHOKETOLASE-RELATED"/>
    <property type="match status" value="1"/>
</dbReference>
<dbReference type="Pfam" id="PF03894">
    <property type="entry name" value="XFP"/>
    <property type="match status" value="1"/>
</dbReference>
<dbReference type="Pfam" id="PF09363">
    <property type="entry name" value="XFP_C"/>
    <property type="match status" value="1"/>
</dbReference>
<dbReference type="Pfam" id="PF09364">
    <property type="entry name" value="XFP_N"/>
    <property type="match status" value="1"/>
</dbReference>
<dbReference type="PIRSF" id="PIRSF017245">
    <property type="entry name" value="Phosphoketolase"/>
    <property type="match status" value="1"/>
</dbReference>
<dbReference type="SUPFAM" id="SSF52518">
    <property type="entry name" value="Thiamin diphosphate-binding fold (THDP-binding)"/>
    <property type="match status" value="2"/>
</dbReference>
<dbReference type="PROSITE" id="PS60002">
    <property type="entry name" value="PHOSPHOKETOLASE_1"/>
    <property type="match status" value="1"/>
</dbReference>
<dbReference type="PROSITE" id="PS60003">
    <property type="entry name" value="PHOSPHOKETOLASE_2"/>
    <property type="match status" value="1"/>
</dbReference>
<keyword id="KW-0456">Lyase</keyword>
<keyword id="KW-1185">Reference proteome</keyword>
<keyword id="KW-0786">Thiamine pyrophosphate</keyword>
<proteinExistence type="inferred from homology"/>
<gene>
    <name type="ordered locus">lp_2659</name>
</gene>
<feature type="chain" id="PRO_0000193878" description="Probable phosphoketolase 1">
    <location>
        <begin position="1"/>
        <end position="788"/>
    </location>
</feature>
<protein>
    <recommendedName>
        <fullName evidence="1">Probable phosphoketolase 1</fullName>
        <ecNumber evidence="1">4.1.2.-</ecNumber>
    </recommendedName>
</protein>
<reference key="1">
    <citation type="journal article" date="2003" name="Proc. Natl. Acad. Sci. U.S.A.">
        <title>Complete genome sequence of Lactobacillus plantarum WCFS1.</title>
        <authorList>
            <person name="Kleerebezem M."/>
            <person name="Boekhorst J."/>
            <person name="van Kranenburg R."/>
            <person name="Molenaar D."/>
            <person name="Kuipers O.P."/>
            <person name="Leer R."/>
            <person name="Tarchini R."/>
            <person name="Peters S.A."/>
            <person name="Sandbrink H.M."/>
            <person name="Fiers M.W.E.J."/>
            <person name="Stiekema W."/>
            <person name="Klein Lankhorst R.M."/>
            <person name="Bron P.A."/>
            <person name="Hoffer S.M."/>
            <person name="Nierop Groot M.N."/>
            <person name="Kerkhoven R."/>
            <person name="De Vries M."/>
            <person name="Ursing B."/>
            <person name="De Vos W.M."/>
            <person name="Siezen R.J."/>
        </authorList>
    </citation>
    <scope>NUCLEOTIDE SEQUENCE [LARGE SCALE GENOMIC DNA]</scope>
    <source>
        <strain>ATCC BAA-793 / NCIMB 8826 / WCFS1</strain>
    </source>
</reference>
<reference key="2">
    <citation type="journal article" date="2012" name="J. Bacteriol.">
        <title>Complete resequencing and reannotation of the Lactobacillus plantarum WCFS1 genome.</title>
        <authorList>
            <person name="Siezen R.J."/>
            <person name="Francke C."/>
            <person name="Renckens B."/>
            <person name="Boekhorst J."/>
            <person name="Wels M."/>
            <person name="Kleerebezem M."/>
            <person name="van Hijum S.A."/>
        </authorList>
    </citation>
    <scope>NUCLEOTIDE SEQUENCE [LARGE SCALE GENOMIC DNA]</scope>
    <scope>GENOME REANNOTATION</scope>
    <source>
        <strain>ATCC BAA-793 / NCIMB 8826 / WCFS1</strain>
    </source>
</reference>
<sequence length="788" mass="88731">MTTDYSSPAYLQKVDKYWRAANYLSVGQLYLKDNPLLQRPLKASDVKVHPIGHWGTIAGQNFIYAHLNRVINKYGLKMFYVEGPGHGGQVMVSNSYLDGTYTDIYPEITQDVEGMQKLFKQFSFPGGVASHAAPETPGSIHEGGELGYSISHGVGAILDNPDEIAAVVVGDGESETGPLATSWQSTKFINPINDGAVLPILNLNGFKISNPTIFGRTSDAKIKEYFESMNWEPIFVEGDDPEKVHPALAKAMDEAVEKIKAIQKHARENNDATLPVWPMIVFRAPKGWTGPKSWDGDKIEGSFRAHQIPIPVDQNDMEHADALVDWLESYQPKELFNEDGSLKDDIKEIIPTGDSRMAANPITNGGVDPKALNLPNFRDYAVDTSKEGANVKQDMIVWSDYLRDVIKKNPDNFRLFGPDETMSNRLYGVFETTNRQWMEDIHPDSDQYEAPAGRVLDAQLSEHQAEGWLEGYVLTGRHGLFASYEAFLRVVDSMLTQHFKWLRKANELDWRKKYPSLNIIAASTVFQQDHNGYTHQDPGALTHLAEKKPEYIREYLPADANTLLAVGDVIFRSQEKINYVVTSKHPRQQWFSIEEAKQLVDNGLGIIDWASTDQGSEPDIVFAAAGTEPTLETLAAIQLLHDSFPEMKIRFVNVVDILKLRSPEKDPRGLSDAEFDHYFTKDKPVVFAFHGYEDLVRDIFFDRHNHNLYVHGYRENGDITTPFDVRVMNQMDRFDLAKSAIAAQPAMENTGAAFVQSMDNMLAKHNAYIRDAGTDLPEVNDWQWKGLK</sequence>
<name>PHK1_LACPL</name>
<accession>Q88U67</accession>
<accession>F9URE9</accession>
<organism>
    <name type="scientific">Lactiplantibacillus plantarum (strain ATCC BAA-793 / NCIMB 8826 / WCFS1)</name>
    <name type="common">Lactobacillus plantarum</name>
    <dbReference type="NCBI Taxonomy" id="220668"/>
    <lineage>
        <taxon>Bacteria</taxon>
        <taxon>Bacillati</taxon>
        <taxon>Bacillota</taxon>
        <taxon>Bacilli</taxon>
        <taxon>Lactobacillales</taxon>
        <taxon>Lactobacillaceae</taxon>
        <taxon>Lactiplantibacillus</taxon>
    </lineage>
</organism>
<evidence type="ECO:0000255" key="1">
    <source>
        <dbReference type="HAMAP-Rule" id="MF_01403"/>
    </source>
</evidence>